<sequence length="70" mass="8506">MTTIRVKENEPFDVALRRFKRTIEKLGLLTDLRAREFYEKPTAERKRKKAAAVKRHYKRVRSMQLPKKLY</sequence>
<organism>
    <name type="scientific">Paracidovorax citrulli (strain AAC00-1)</name>
    <name type="common">Acidovorax citrulli</name>
    <dbReference type="NCBI Taxonomy" id="397945"/>
    <lineage>
        <taxon>Bacteria</taxon>
        <taxon>Pseudomonadati</taxon>
        <taxon>Pseudomonadota</taxon>
        <taxon>Betaproteobacteria</taxon>
        <taxon>Burkholderiales</taxon>
        <taxon>Comamonadaceae</taxon>
        <taxon>Paracidovorax</taxon>
    </lineage>
</organism>
<keyword id="KW-0687">Ribonucleoprotein</keyword>
<keyword id="KW-0689">Ribosomal protein</keyword>
<accession>A1TNY6</accession>
<reference key="1">
    <citation type="submission" date="2006-12" db="EMBL/GenBank/DDBJ databases">
        <title>Complete sequence of Acidovorax avenae subsp. citrulli AAC00-1.</title>
        <authorList>
            <person name="Copeland A."/>
            <person name="Lucas S."/>
            <person name="Lapidus A."/>
            <person name="Barry K."/>
            <person name="Detter J.C."/>
            <person name="Glavina del Rio T."/>
            <person name="Dalin E."/>
            <person name="Tice H."/>
            <person name="Pitluck S."/>
            <person name="Kiss H."/>
            <person name="Brettin T."/>
            <person name="Bruce D."/>
            <person name="Han C."/>
            <person name="Tapia R."/>
            <person name="Gilna P."/>
            <person name="Schmutz J."/>
            <person name="Larimer F."/>
            <person name="Land M."/>
            <person name="Hauser L."/>
            <person name="Kyrpides N."/>
            <person name="Kim E."/>
            <person name="Stahl D."/>
            <person name="Richardson P."/>
        </authorList>
    </citation>
    <scope>NUCLEOTIDE SEQUENCE [LARGE SCALE GENOMIC DNA]</scope>
    <source>
        <strain>AAC00-1</strain>
    </source>
</reference>
<dbReference type="EMBL" id="CP000512">
    <property type="protein sequence ID" value="ABM32674.1"/>
    <property type="molecule type" value="Genomic_DNA"/>
</dbReference>
<dbReference type="RefSeq" id="WP_007833691.1">
    <property type="nucleotide sequence ID" value="NC_008752.1"/>
</dbReference>
<dbReference type="SMR" id="A1TNY6"/>
<dbReference type="STRING" id="397945.Aave_2092"/>
<dbReference type="GeneID" id="92351961"/>
<dbReference type="KEGG" id="aav:Aave_2092"/>
<dbReference type="eggNOG" id="COG0828">
    <property type="taxonomic scope" value="Bacteria"/>
</dbReference>
<dbReference type="HOGENOM" id="CLU_159258_1_2_4"/>
<dbReference type="OrthoDB" id="9799244at2"/>
<dbReference type="Proteomes" id="UP000002596">
    <property type="component" value="Chromosome"/>
</dbReference>
<dbReference type="GO" id="GO:1990904">
    <property type="term" value="C:ribonucleoprotein complex"/>
    <property type="evidence" value="ECO:0007669"/>
    <property type="project" value="UniProtKB-KW"/>
</dbReference>
<dbReference type="GO" id="GO:0005840">
    <property type="term" value="C:ribosome"/>
    <property type="evidence" value="ECO:0007669"/>
    <property type="project" value="UniProtKB-KW"/>
</dbReference>
<dbReference type="GO" id="GO:0003735">
    <property type="term" value="F:structural constituent of ribosome"/>
    <property type="evidence" value="ECO:0007669"/>
    <property type="project" value="InterPro"/>
</dbReference>
<dbReference type="GO" id="GO:0006412">
    <property type="term" value="P:translation"/>
    <property type="evidence" value="ECO:0007669"/>
    <property type="project" value="UniProtKB-UniRule"/>
</dbReference>
<dbReference type="Gene3D" id="1.20.5.1150">
    <property type="entry name" value="Ribosomal protein S8"/>
    <property type="match status" value="1"/>
</dbReference>
<dbReference type="HAMAP" id="MF_00358">
    <property type="entry name" value="Ribosomal_bS21"/>
    <property type="match status" value="1"/>
</dbReference>
<dbReference type="InterPro" id="IPR001911">
    <property type="entry name" value="Ribosomal_bS21"/>
</dbReference>
<dbReference type="InterPro" id="IPR018278">
    <property type="entry name" value="Ribosomal_bS21_CS"/>
</dbReference>
<dbReference type="InterPro" id="IPR038380">
    <property type="entry name" value="Ribosomal_bS21_sf"/>
</dbReference>
<dbReference type="NCBIfam" id="TIGR00030">
    <property type="entry name" value="S21p"/>
    <property type="match status" value="1"/>
</dbReference>
<dbReference type="PANTHER" id="PTHR21109">
    <property type="entry name" value="MITOCHONDRIAL 28S RIBOSOMAL PROTEIN S21"/>
    <property type="match status" value="1"/>
</dbReference>
<dbReference type="PANTHER" id="PTHR21109:SF22">
    <property type="entry name" value="SMALL RIBOSOMAL SUBUNIT PROTEIN BS21"/>
    <property type="match status" value="1"/>
</dbReference>
<dbReference type="Pfam" id="PF01165">
    <property type="entry name" value="Ribosomal_S21"/>
    <property type="match status" value="1"/>
</dbReference>
<dbReference type="PRINTS" id="PR00976">
    <property type="entry name" value="RIBOSOMALS21"/>
</dbReference>
<dbReference type="PROSITE" id="PS01181">
    <property type="entry name" value="RIBOSOMAL_S21"/>
    <property type="match status" value="1"/>
</dbReference>
<name>RS21_PARC0</name>
<evidence type="ECO:0000255" key="1">
    <source>
        <dbReference type="HAMAP-Rule" id="MF_00358"/>
    </source>
</evidence>
<evidence type="ECO:0000305" key="2"/>
<proteinExistence type="inferred from homology"/>
<feature type="chain" id="PRO_1000005088" description="Small ribosomal subunit protein bS21">
    <location>
        <begin position="1"/>
        <end position="70"/>
    </location>
</feature>
<comment type="similarity">
    <text evidence="1">Belongs to the bacterial ribosomal protein bS21 family.</text>
</comment>
<protein>
    <recommendedName>
        <fullName evidence="1">Small ribosomal subunit protein bS21</fullName>
    </recommendedName>
    <alternativeName>
        <fullName evidence="2">30S ribosomal protein S21</fullName>
    </alternativeName>
</protein>
<gene>
    <name evidence="1" type="primary">rpsU</name>
    <name type="ordered locus">Aave_2092</name>
</gene>